<feature type="chain" id="PRO_0000058920" description="Protein FAM13A">
    <location>
        <begin position="1"/>
        <end position="1023"/>
    </location>
</feature>
<feature type="domain" description="Rho-GAP" evidence="3">
    <location>
        <begin position="43"/>
        <end position="231"/>
    </location>
</feature>
<feature type="region of interest" description="Disordered" evidence="4">
    <location>
        <begin position="269"/>
        <end position="290"/>
    </location>
</feature>
<feature type="region of interest" description="Disordered" evidence="4">
    <location>
        <begin position="381"/>
        <end position="437"/>
    </location>
</feature>
<feature type="region of interest" description="Disordered" evidence="4">
    <location>
        <begin position="459"/>
        <end position="562"/>
    </location>
</feature>
<feature type="region of interest" description="Disordered" evidence="4">
    <location>
        <begin position="628"/>
        <end position="663"/>
    </location>
</feature>
<feature type="region of interest" description="Disordered" evidence="4">
    <location>
        <begin position="726"/>
        <end position="759"/>
    </location>
</feature>
<feature type="coiled-coil region" evidence="2">
    <location>
        <begin position="666"/>
        <end position="730"/>
    </location>
</feature>
<feature type="coiled-coil region" evidence="2">
    <location>
        <begin position="946"/>
        <end position="978"/>
    </location>
</feature>
<feature type="compositionally biased region" description="Low complexity" evidence="4">
    <location>
        <begin position="384"/>
        <end position="405"/>
    </location>
</feature>
<feature type="compositionally biased region" description="Basic and acidic residues" evidence="4">
    <location>
        <begin position="412"/>
        <end position="427"/>
    </location>
</feature>
<feature type="compositionally biased region" description="Basic and acidic residues" evidence="4">
    <location>
        <begin position="509"/>
        <end position="524"/>
    </location>
</feature>
<feature type="compositionally biased region" description="Polar residues" evidence="4">
    <location>
        <begin position="536"/>
        <end position="549"/>
    </location>
</feature>
<feature type="compositionally biased region" description="Polar residues" evidence="4">
    <location>
        <begin position="738"/>
        <end position="748"/>
    </location>
</feature>
<feature type="compositionally biased region" description="Basic and acidic residues" evidence="4">
    <location>
        <begin position="750"/>
        <end position="759"/>
    </location>
</feature>
<feature type="site" description="Arginine finger; crucial for GTP hydrolysis by stabilizing the transition state" evidence="3">
    <location>
        <position position="81"/>
    </location>
</feature>
<feature type="modified residue" description="Phosphoserine" evidence="1">
    <location>
        <position position="345"/>
    </location>
</feature>
<feature type="modified residue" description="Phosphoserine" evidence="1">
    <location>
        <position position="597"/>
    </location>
</feature>
<feature type="modified residue" description="Phosphoserine" evidence="1">
    <location>
        <position position="617"/>
    </location>
</feature>
<feature type="modified residue" description="Phosphoserine" evidence="1">
    <location>
        <position position="727"/>
    </location>
</feature>
<feature type="modified residue" description="Phosphothreonine" evidence="11">
    <location>
        <position position="732"/>
    </location>
</feature>
<feature type="splice variant" id="VSP_039152" description="In isoform 5." evidence="8">
    <location>
        <begin position="1"/>
        <end position="354"/>
    </location>
</feature>
<feature type="splice variant" id="VSP_039153" description="In isoform 4." evidence="9">
    <location>
        <begin position="1"/>
        <end position="340"/>
    </location>
</feature>
<feature type="splice variant" id="VSP_039154" description="In isoform 1 and isoform 2." evidence="7 8">
    <location>
        <begin position="1"/>
        <end position="326"/>
    </location>
</feature>
<feature type="splice variant" id="VSP_039155" description="In isoform 1 and isoform 2." evidence="7 8">
    <original>GAISAKLVP</original>
    <variation>MACEIMPLQ</variation>
    <location>
        <begin position="327"/>
        <end position="335"/>
    </location>
</feature>
<feature type="splice variant" id="VSP_039156" description="In isoform 4." evidence="9">
    <original>ERPLSPFYL</original>
    <variation>MACEIMPLQ</variation>
    <location>
        <begin position="341"/>
        <end position="349"/>
    </location>
</feature>
<feature type="splice variant" id="VSP_039157" description="In isoform 5." evidence="8">
    <original>QVSNVSATGE</original>
    <variation>MACEIMPLQR</variation>
    <location>
        <begin position="355"/>
        <end position="364"/>
    </location>
</feature>
<feature type="splice variant" id="VSP_039158" description="In isoform 2." evidence="7 8">
    <location>
        <begin position="855"/>
        <end position="882"/>
    </location>
</feature>
<feature type="sequence variant" id="VAR_049019" description="In dbSNP:rs7657817." evidence="6">
    <original>V</original>
    <variation>I</variation>
    <location>
        <position position="769"/>
    </location>
</feature>
<feature type="sequence conflict" description="In Ref. 2; AK027138." evidence="10" ref="2">
    <original>S</original>
    <variation>T</variation>
    <location>
        <position position="509"/>
    </location>
</feature>
<feature type="sequence conflict" description="In Ref. 2; BAG59483." evidence="10" ref="2">
    <original>N</original>
    <variation>Y</variation>
    <location>
        <position position="740"/>
    </location>
</feature>
<proteinExistence type="evidence at protein level"/>
<dbReference type="EMBL" id="AB020721">
    <property type="protein sequence ID" value="BAA74937.3"/>
    <property type="status" value="ALT_INIT"/>
    <property type="molecule type" value="mRNA"/>
</dbReference>
<dbReference type="EMBL" id="AK027138">
    <property type="status" value="NOT_ANNOTATED_CDS"/>
    <property type="molecule type" value="mRNA"/>
</dbReference>
<dbReference type="EMBL" id="AK091328">
    <property type="protein sequence ID" value="BAC03636.1"/>
    <property type="status" value="ALT_SEQ"/>
    <property type="molecule type" value="mRNA"/>
</dbReference>
<dbReference type="EMBL" id="AK296932">
    <property type="protein sequence ID" value="BAG59483.1"/>
    <property type="molecule type" value="mRNA"/>
</dbReference>
<dbReference type="EMBL" id="AC108065">
    <property type="status" value="NOT_ANNOTATED_CDS"/>
    <property type="molecule type" value="Genomic_DNA"/>
</dbReference>
<dbReference type="EMBL" id="AC021183">
    <property type="status" value="NOT_ANNOTATED_CDS"/>
    <property type="molecule type" value="Genomic_DNA"/>
</dbReference>
<dbReference type="EMBL" id="BC086875">
    <property type="protein sequence ID" value="AAH86875.1"/>
    <property type="molecule type" value="mRNA"/>
</dbReference>
<dbReference type="EMBL" id="BN000265">
    <property type="protein sequence ID" value="CAE18110.1"/>
    <property type="molecule type" value="mRNA"/>
</dbReference>
<dbReference type="CCDS" id="CCDS34029.1">
    <molecule id="O94988-4"/>
</dbReference>
<dbReference type="CCDS" id="CCDS43251.1">
    <molecule id="O94988-1"/>
</dbReference>
<dbReference type="CCDS" id="CCDS58911.1">
    <molecule id="O94988-6"/>
</dbReference>
<dbReference type="CCDS" id="CCDS58912.1">
    <molecule id="O94988-5"/>
</dbReference>
<dbReference type="CCDS" id="CCDS58913.1">
    <molecule id="O94988-3"/>
</dbReference>
<dbReference type="RefSeq" id="NP_001015045.1">
    <molecule id="O94988-1"/>
    <property type="nucleotide sequence ID" value="NM_001015045.3"/>
</dbReference>
<dbReference type="RefSeq" id="NP_001252507.1">
    <molecule id="O94988-5"/>
    <property type="nucleotide sequence ID" value="NM_001265578.2"/>
</dbReference>
<dbReference type="RefSeq" id="NP_001252508.1">
    <molecule id="O94988-3"/>
    <property type="nucleotide sequence ID" value="NM_001265579.2"/>
</dbReference>
<dbReference type="RefSeq" id="NP_001252509.1">
    <molecule id="O94988-6"/>
    <property type="nucleotide sequence ID" value="NM_001265580.2"/>
</dbReference>
<dbReference type="RefSeq" id="NP_055698.2">
    <molecule id="O94988-4"/>
    <property type="nucleotide sequence ID" value="NM_014883.4"/>
</dbReference>
<dbReference type="RefSeq" id="XP_011529818.1">
    <molecule id="O94988-4"/>
    <property type="nucleotide sequence ID" value="XM_011531516.2"/>
</dbReference>
<dbReference type="RefSeq" id="XP_054204673.1">
    <molecule id="O94988-4"/>
    <property type="nucleotide sequence ID" value="XM_054348698.1"/>
</dbReference>
<dbReference type="SMR" id="O94988"/>
<dbReference type="BioGRID" id="115447">
    <property type="interactions" value="32"/>
</dbReference>
<dbReference type="FunCoup" id="O94988">
    <property type="interactions" value="1160"/>
</dbReference>
<dbReference type="IntAct" id="O94988">
    <property type="interactions" value="33"/>
</dbReference>
<dbReference type="MINT" id="O94988"/>
<dbReference type="STRING" id="9606.ENSP00000264344"/>
<dbReference type="iPTMnet" id="O94988"/>
<dbReference type="PhosphoSitePlus" id="O94988"/>
<dbReference type="BioMuta" id="FAM13A"/>
<dbReference type="jPOST" id="O94988"/>
<dbReference type="MassIVE" id="O94988"/>
<dbReference type="PaxDb" id="9606-ENSP00000264344"/>
<dbReference type="PeptideAtlas" id="O94988"/>
<dbReference type="ProteomicsDB" id="50613">
    <molecule id="O94988-4"/>
</dbReference>
<dbReference type="ProteomicsDB" id="50614">
    <molecule id="O94988-1"/>
</dbReference>
<dbReference type="ProteomicsDB" id="50615">
    <molecule id="O94988-3"/>
</dbReference>
<dbReference type="ProteomicsDB" id="50616">
    <molecule id="O94988-5"/>
</dbReference>
<dbReference type="ProteomicsDB" id="50617">
    <molecule id="O94988-6"/>
</dbReference>
<dbReference type="Antibodypedia" id="52083">
    <property type="antibodies" value="46 antibodies from 19 providers"/>
</dbReference>
<dbReference type="DNASU" id="10144"/>
<dbReference type="Ensembl" id="ENST00000264344.10">
    <molecule id="O94988-4"/>
    <property type="protein sequence ID" value="ENSP00000264344.5"/>
    <property type="gene ID" value="ENSG00000138640.15"/>
</dbReference>
<dbReference type="Ensembl" id="ENST00000395002.6">
    <molecule id="O94988-3"/>
    <property type="protein sequence ID" value="ENSP00000378450.2"/>
    <property type="gene ID" value="ENSG00000138640.15"/>
</dbReference>
<dbReference type="Ensembl" id="ENST00000503556.5">
    <molecule id="O94988-5"/>
    <property type="protein sequence ID" value="ENSP00000427189.1"/>
    <property type="gene ID" value="ENSG00000138640.15"/>
</dbReference>
<dbReference type="Ensembl" id="ENST00000508369.5">
    <molecule id="O94988-1"/>
    <property type="protein sequence ID" value="ENSP00000421562.1"/>
    <property type="gene ID" value="ENSG00000138640.15"/>
</dbReference>
<dbReference type="Ensembl" id="ENST00000513837.5">
    <molecule id="O94988-6"/>
    <property type="protein sequence ID" value="ENSP00000423252.1"/>
    <property type="gene ID" value="ENSG00000138640.15"/>
</dbReference>
<dbReference type="GeneID" id="10144"/>
<dbReference type="KEGG" id="hsa:10144"/>
<dbReference type="MANE-Select" id="ENST00000264344.10">
    <property type="protein sequence ID" value="ENSP00000264344.5"/>
    <property type="RefSeq nucleotide sequence ID" value="NM_014883.4"/>
    <property type="RefSeq protein sequence ID" value="NP_055698.2"/>
</dbReference>
<dbReference type="UCSC" id="uc003hsb.3">
    <molecule id="O94988-4"/>
    <property type="organism name" value="human"/>
</dbReference>
<dbReference type="AGR" id="HGNC:19367"/>
<dbReference type="CTD" id="10144"/>
<dbReference type="DisGeNET" id="10144"/>
<dbReference type="GeneCards" id="FAM13A"/>
<dbReference type="HGNC" id="HGNC:19367">
    <property type="gene designation" value="FAM13A"/>
</dbReference>
<dbReference type="HPA" id="ENSG00000138640">
    <property type="expression patterns" value="Low tissue specificity"/>
</dbReference>
<dbReference type="MalaCards" id="FAM13A"/>
<dbReference type="MIM" id="613299">
    <property type="type" value="gene"/>
</dbReference>
<dbReference type="neXtProt" id="NX_O94988"/>
<dbReference type="OpenTargets" id="ENSG00000138640"/>
<dbReference type="Orphanet" id="2032">
    <property type="disease" value="Idiopathic pulmonary fibrosis"/>
</dbReference>
<dbReference type="PharmGKB" id="PA164719541"/>
<dbReference type="VEuPathDB" id="HostDB:ENSG00000138640"/>
<dbReference type="eggNOG" id="KOG4270">
    <property type="taxonomic scope" value="Eukaryota"/>
</dbReference>
<dbReference type="GeneTree" id="ENSGT00950000183033"/>
<dbReference type="InParanoid" id="O94988"/>
<dbReference type="OMA" id="LPRGLWI"/>
<dbReference type="OrthoDB" id="185175at2759"/>
<dbReference type="PAN-GO" id="O94988">
    <property type="GO annotations" value="0 GO annotations based on evolutionary models"/>
</dbReference>
<dbReference type="PhylomeDB" id="O94988"/>
<dbReference type="TreeFam" id="TF328895"/>
<dbReference type="PathwayCommons" id="O94988"/>
<dbReference type="Reactome" id="R-HSA-8980692">
    <property type="pathway name" value="RHOA GTPase cycle"/>
</dbReference>
<dbReference type="Reactome" id="R-HSA-9013149">
    <property type="pathway name" value="RAC1 GTPase cycle"/>
</dbReference>
<dbReference type="SignaLink" id="O94988"/>
<dbReference type="SIGNOR" id="O94988"/>
<dbReference type="BioGRID-ORCS" id="10144">
    <property type="hits" value="6 hits in 1157 CRISPR screens"/>
</dbReference>
<dbReference type="ChiTaRS" id="FAM13A">
    <property type="organism name" value="human"/>
</dbReference>
<dbReference type="GeneWiki" id="Family_with_sequence_similarity_13,_member_A1"/>
<dbReference type="GenomeRNAi" id="10144"/>
<dbReference type="Pharos" id="O94988">
    <property type="development level" value="Tbio"/>
</dbReference>
<dbReference type="PRO" id="PR:O94988"/>
<dbReference type="Proteomes" id="UP000005640">
    <property type="component" value="Chromosome 4"/>
</dbReference>
<dbReference type="RNAct" id="O94988">
    <property type="molecule type" value="protein"/>
</dbReference>
<dbReference type="Bgee" id="ENSG00000138640">
    <property type="expression patterns" value="Expressed in secondary oocyte and 203 other cell types or tissues"/>
</dbReference>
<dbReference type="ExpressionAtlas" id="O94988">
    <property type="expression patterns" value="baseline and differential"/>
</dbReference>
<dbReference type="GO" id="GO:0005829">
    <property type="term" value="C:cytosol"/>
    <property type="evidence" value="ECO:0000304"/>
    <property type="project" value="Reactome"/>
</dbReference>
<dbReference type="GO" id="GO:0005096">
    <property type="term" value="F:GTPase activator activity"/>
    <property type="evidence" value="ECO:0000304"/>
    <property type="project" value="Reactome"/>
</dbReference>
<dbReference type="GO" id="GO:0051056">
    <property type="term" value="P:regulation of small GTPase mediated signal transduction"/>
    <property type="evidence" value="ECO:0000304"/>
    <property type="project" value="Reactome"/>
</dbReference>
<dbReference type="GO" id="GO:0007165">
    <property type="term" value="P:signal transduction"/>
    <property type="evidence" value="ECO:0007669"/>
    <property type="project" value="InterPro"/>
</dbReference>
<dbReference type="CDD" id="cd04393">
    <property type="entry name" value="RhoGAP_FAM13A1a"/>
    <property type="match status" value="1"/>
</dbReference>
<dbReference type="FunFam" id="1.10.555.10:FF:000040">
    <property type="entry name" value="Family with sequence similarity 13 member A"/>
    <property type="match status" value="1"/>
</dbReference>
<dbReference type="Gene3D" id="1.10.555.10">
    <property type="entry name" value="Rho GTPase activation protein"/>
    <property type="match status" value="1"/>
</dbReference>
<dbReference type="InterPro" id="IPR039102">
    <property type="entry name" value="FAM13"/>
</dbReference>
<dbReference type="InterPro" id="IPR008936">
    <property type="entry name" value="Rho_GTPase_activation_prot"/>
</dbReference>
<dbReference type="InterPro" id="IPR000198">
    <property type="entry name" value="RhoGAP_dom"/>
</dbReference>
<dbReference type="PANTHER" id="PTHR15904">
    <property type="entry name" value="FAM13"/>
    <property type="match status" value="1"/>
</dbReference>
<dbReference type="PANTHER" id="PTHR15904:SF18">
    <property type="entry name" value="PROTEIN FAM13A"/>
    <property type="match status" value="1"/>
</dbReference>
<dbReference type="Pfam" id="PF00620">
    <property type="entry name" value="RhoGAP"/>
    <property type="match status" value="1"/>
</dbReference>
<dbReference type="SMART" id="SM00324">
    <property type="entry name" value="RhoGAP"/>
    <property type="match status" value="1"/>
</dbReference>
<dbReference type="SUPFAM" id="SSF48350">
    <property type="entry name" value="GTPase activation domain, GAP"/>
    <property type="match status" value="1"/>
</dbReference>
<dbReference type="PROSITE" id="PS50238">
    <property type="entry name" value="RHOGAP"/>
    <property type="match status" value="1"/>
</dbReference>
<organism>
    <name type="scientific">Homo sapiens</name>
    <name type="common">Human</name>
    <dbReference type="NCBI Taxonomy" id="9606"/>
    <lineage>
        <taxon>Eukaryota</taxon>
        <taxon>Metazoa</taxon>
        <taxon>Chordata</taxon>
        <taxon>Craniata</taxon>
        <taxon>Vertebrata</taxon>
        <taxon>Euteleostomi</taxon>
        <taxon>Mammalia</taxon>
        <taxon>Eutheria</taxon>
        <taxon>Euarchontoglires</taxon>
        <taxon>Primates</taxon>
        <taxon>Haplorrhini</taxon>
        <taxon>Catarrhini</taxon>
        <taxon>Hominidae</taxon>
        <taxon>Homo</taxon>
    </lineage>
</organism>
<protein>
    <recommendedName>
        <fullName>Protein FAM13A</fullName>
    </recommendedName>
</protein>
<comment type="alternative products">
    <event type="alternative splicing"/>
    <isoform>
        <id>O94988-4</id>
        <name>3</name>
        <name>FAM13A1_v2</name>
        <sequence type="displayed"/>
    </isoform>
    <isoform>
        <id>O94988-1</id>
        <name>1</name>
        <name>FAM13A1_v1</name>
        <sequence type="described" ref="VSP_039154 VSP_039155"/>
    </isoform>
    <isoform>
        <id>O94988-3</id>
        <name>2</name>
        <sequence type="described" ref="VSP_039154 VSP_039155 VSP_039158"/>
    </isoform>
    <isoform>
        <id>O94988-5</id>
        <name>4</name>
        <sequence type="described" ref="VSP_039153 VSP_039156"/>
    </isoform>
    <isoform>
        <id>O94988-6</id>
        <name>5</name>
        <sequence type="described" ref="VSP_039152 VSP_039157"/>
    </isoform>
</comment>
<comment type="tissue specificity">
    <text evidence="5">Isoform 1 is widely expressed, with highest expression in skeletal muscle, thymus, brain and lung. Isoform 3 is less abundant than isoform 1 and predominantly expressed in kidney, pancreas, liver, lung and thymus.</text>
</comment>
<comment type="similarity">
    <text evidence="10">Belongs to the FAM13 family.</text>
</comment>
<comment type="sequence caution" evidence="10">
    <conflict type="erroneous initiation">
        <sequence resource="EMBL-CDS" id="BAA74937"/>
    </conflict>
    <text>Extended N-terminus.</text>
</comment>
<comment type="sequence caution" evidence="10">
    <conflict type="miscellaneous discrepancy">
        <sequence resource="EMBL-CDS" id="BAC03636"/>
    </conflict>
    <text>Intron retention.</text>
</comment>
<reference key="1">
    <citation type="journal article" date="1998" name="DNA Res.">
        <title>Prediction of the coding sequences of unidentified human genes. XII. The complete sequences of 100 new cDNA clones from brain which code for large proteins in vitro.</title>
        <authorList>
            <person name="Nagase T."/>
            <person name="Ishikawa K."/>
            <person name="Suyama M."/>
            <person name="Kikuno R."/>
            <person name="Hirosawa M."/>
            <person name="Miyajima N."/>
            <person name="Tanaka A."/>
            <person name="Kotani H."/>
            <person name="Nomura N."/>
            <person name="Ohara O."/>
        </authorList>
    </citation>
    <scope>NUCLEOTIDE SEQUENCE [LARGE SCALE MRNA] (ISOFORM 2)</scope>
    <source>
        <tissue>Spleen</tissue>
    </source>
</reference>
<reference key="2">
    <citation type="journal article" date="2004" name="Nat. Genet.">
        <title>Complete sequencing and characterization of 21,243 full-length human cDNAs.</title>
        <authorList>
            <person name="Ota T."/>
            <person name="Suzuki Y."/>
            <person name="Nishikawa T."/>
            <person name="Otsuki T."/>
            <person name="Sugiyama T."/>
            <person name="Irie R."/>
            <person name="Wakamatsu A."/>
            <person name="Hayashi K."/>
            <person name="Sato H."/>
            <person name="Nagai K."/>
            <person name="Kimura K."/>
            <person name="Makita H."/>
            <person name="Sekine M."/>
            <person name="Obayashi M."/>
            <person name="Nishi T."/>
            <person name="Shibahara T."/>
            <person name="Tanaka T."/>
            <person name="Ishii S."/>
            <person name="Yamamoto J."/>
            <person name="Saito K."/>
            <person name="Kawai Y."/>
            <person name="Isono Y."/>
            <person name="Nakamura Y."/>
            <person name="Nagahari K."/>
            <person name="Murakami K."/>
            <person name="Yasuda T."/>
            <person name="Iwayanagi T."/>
            <person name="Wagatsuma M."/>
            <person name="Shiratori A."/>
            <person name="Sudo H."/>
            <person name="Hosoiri T."/>
            <person name="Kaku Y."/>
            <person name="Kodaira H."/>
            <person name="Kondo H."/>
            <person name="Sugawara M."/>
            <person name="Takahashi M."/>
            <person name="Kanda K."/>
            <person name="Yokoi T."/>
            <person name="Furuya T."/>
            <person name="Kikkawa E."/>
            <person name="Omura Y."/>
            <person name="Abe K."/>
            <person name="Kamihara K."/>
            <person name="Katsuta N."/>
            <person name="Sato K."/>
            <person name="Tanikawa M."/>
            <person name="Yamazaki M."/>
            <person name="Ninomiya K."/>
            <person name="Ishibashi T."/>
            <person name="Yamashita H."/>
            <person name="Murakawa K."/>
            <person name="Fujimori K."/>
            <person name="Tanai H."/>
            <person name="Kimata M."/>
            <person name="Watanabe M."/>
            <person name="Hiraoka S."/>
            <person name="Chiba Y."/>
            <person name="Ishida S."/>
            <person name="Ono Y."/>
            <person name="Takiguchi S."/>
            <person name="Watanabe S."/>
            <person name="Yosida M."/>
            <person name="Hotuta T."/>
            <person name="Kusano J."/>
            <person name="Kanehori K."/>
            <person name="Takahashi-Fujii A."/>
            <person name="Hara H."/>
            <person name="Tanase T.-O."/>
            <person name="Nomura Y."/>
            <person name="Togiya S."/>
            <person name="Komai F."/>
            <person name="Hara R."/>
            <person name="Takeuchi K."/>
            <person name="Arita M."/>
            <person name="Imose N."/>
            <person name="Musashino K."/>
            <person name="Yuuki H."/>
            <person name="Oshima A."/>
            <person name="Sasaki N."/>
            <person name="Aotsuka S."/>
            <person name="Yoshikawa Y."/>
            <person name="Matsunawa H."/>
            <person name="Ichihara T."/>
            <person name="Shiohata N."/>
            <person name="Sano S."/>
            <person name="Moriya S."/>
            <person name="Momiyama H."/>
            <person name="Satoh N."/>
            <person name="Takami S."/>
            <person name="Terashima Y."/>
            <person name="Suzuki O."/>
            <person name="Nakagawa S."/>
            <person name="Senoh A."/>
            <person name="Mizoguchi H."/>
            <person name="Goto Y."/>
            <person name="Shimizu F."/>
            <person name="Wakebe H."/>
            <person name="Hishigaki H."/>
            <person name="Watanabe T."/>
            <person name="Sugiyama A."/>
            <person name="Takemoto M."/>
            <person name="Kawakami B."/>
            <person name="Yamazaki M."/>
            <person name="Watanabe K."/>
            <person name="Kumagai A."/>
            <person name="Itakura S."/>
            <person name="Fukuzumi Y."/>
            <person name="Fujimori Y."/>
            <person name="Komiyama M."/>
            <person name="Tashiro H."/>
            <person name="Tanigami A."/>
            <person name="Fujiwara T."/>
            <person name="Ono T."/>
            <person name="Yamada K."/>
            <person name="Fujii Y."/>
            <person name="Ozaki K."/>
            <person name="Hirao M."/>
            <person name="Ohmori Y."/>
            <person name="Kawabata A."/>
            <person name="Hikiji T."/>
            <person name="Kobatake N."/>
            <person name="Inagaki H."/>
            <person name="Ikema Y."/>
            <person name="Okamoto S."/>
            <person name="Okitani R."/>
            <person name="Kawakami T."/>
            <person name="Noguchi S."/>
            <person name="Itoh T."/>
            <person name="Shigeta K."/>
            <person name="Senba T."/>
            <person name="Matsumura K."/>
            <person name="Nakajima Y."/>
            <person name="Mizuno T."/>
            <person name="Morinaga M."/>
            <person name="Sasaki M."/>
            <person name="Togashi T."/>
            <person name="Oyama M."/>
            <person name="Hata H."/>
            <person name="Watanabe M."/>
            <person name="Komatsu T."/>
            <person name="Mizushima-Sugano J."/>
            <person name="Satoh T."/>
            <person name="Shirai Y."/>
            <person name="Takahashi Y."/>
            <person name="Nakagawa K."/>
            <person name="Okumura K."/>
            <person name="Nagase T."/>
            <person name="Nomura N."/>
            <person name="Kikuchi H."/>
            <person name="Masuho Y."/>
            <person name="Yamashita R."/>
            <person name="Nakai K."/>
            <person name="Yada T."/>
            <person name="Nakamura Y."/>
            <person name="Ohara O."/>
            <person name="Isogai T."/>
            <person name="Sugano S."/>
        </authorList>
    </citation>
    <scope>NUCLEOTIDE SEQUENCE [LARGE SCALE MRNA] (ISOFORMS 1 AND 5)</scope>
    <scope>NUCLEOTIDE SEQUENCE [LARGE SCALE MRNA] OF 526-1023 (ISOFORM 2)</scope>
    <source>
        <tissue>Fetal brain</tissue>
        <tissue>Ileal mucosa</tissue>
        <tissue>Tongue</tissue>
    </source>
</reference>
<reference key="3">
    <citation type="journal article" date="2005" name="Nature">
        <title>Generation and annotation of the DNA sequences of human chromosomes 2 and 4.</title>
        <authorList>
            <person name="Hillier L.W."/>
            <person name="Graves T.A."/>
            <person name="Fulton R.S."/>
            <person name="Fulton L.A."/>
            <person name="Pepin K.H."/>
            <person name="Minx P."/>
            <person name="Wagner-McPherson C."/>
            <person name="Layman D."/>
            <person name="Wylie K."/>
            <person name="Sekhon M."/>
            <person name="Becker M.C."/>
            <person name="Fewell G.A."/>
            <person name="Delehaunty K.D."/>
            <person name="Miner T.L."/>
            <person name="Nash W.E."/>
            <person name="Kremitzki C."/>
            <person name="Oddy L."/>
            <person name="Du H."/>
            <person name="Sun H."/>
            <person name="Bradshaw-Cordum H."/>
            <person name="Ali J."/>
            <person name="Carter J."/>
            <person name="Cordes M."/>
            <person name="Harris A."/>
            <person name="Isak A."/>
            <person name="van Brunt A."/>
            <person name="Nguyen C."/>
            <person name="Du F."/>
            <person name="Courtney L."/>
            <person name="Kalicki J."/>
            <person name="Ozersky P."/>
            <person name="Abbott S."/>
            <person name="Armstrong J."/>
            <person name="Belter E.A."/>
            <person name="Caruso L."/>
            <person name="Cedroni M."/>
            <person name="Cotton M."/>
            <person name="Davidson T."/>
            <person name="Desai A."/>
            <person name="Elliott G."/>
            <person name="Erb T."/>
            <person name="Fronick C."/>
            <person name="Gaige T."/>
            <person name="Haakenson W."/>
            <person name="Haglund K."/>
            <person name="Holmes A."/>
            <person name="Harkins R."/>
            <person name="Kim K."/>
            <person name="Kruchowski S.S."/>
            <person name="Strong C.M."/>
            <person name="Grewal N."/>
            <person name="Goyea E."/>
            <person name="Hou S."/>
            <person name="Levy A."/>
            <person name="Martinka S."/>
            <person name="Mead K."/>
            <person name="McLellan M.D."/>
            <person name="Meyer R."/>
            <person name="Randall-Maher J."/>
            <person name="Tomlinson C."/>
            <person name="Dauphin-Kohlberg S."/>
            <person name="Kozlowicz-Reilly A."/>
            <person name="Shah N."/>
            <person name="Swearengen-Shahid S."/>
            <person name="Snider J."/>
            <person name="Strong J.T."/>
            <person name="Thompson J."/>
            <person name="Yoakum M."/>
            <person name="Leonard S."/>
            <person name="Pearman C."/>
            <person name="Trani L."/>
            <person name="Radionenko M."/>
            <person name="Waligorski J.E."/>
            <person name="Wang C."/>
            <person name="Rock S.M."/>
            <person name="Tin-Wollam A.-M."/>
            <person name="Maupin R."/>
            <person name="Latreille P."/>
            <person name="Wendl M.C."/>
            <person name="Yang S.-P."/>
            <person name="Pohl C."/>
            <person name="Wallis J.W."/>
            <person name="Spieth J."/>
            <person name="Bieri T.A."/>
            <person name="Berkowicz N."/>
            <person name="Nelson J.O."/>
            <person name="Osborne J."/>
            <person name="Ding L."/>
            <person name="Meyer R."/>
            <person name="Sabo A."/>
            <person name="Shotland Y."/>
            <person name="Sinha P."/>
            <person name="Wohldmann P.E."/>
            <person name="Cook L.L."/>
            <person name="Hickenbotham M.T."/>
            <person name="Eldred J."/>
            <person name="Williams D."/>
            <person name="Jones T.A."/>
            <person name="She X."/>
            <person name="Ciccarelli F.D."/>
            <person name="Izaurralde E."/>
            <person name="Taylor J."/>
            <person name="Schmutz J."/>
            <person name="Myers R.M."/>
            <person name="Cox D.R."/>
            <person name="Huang X."/>
            <person name="McPherson J.D."/>
            <person name="Mardis E.R."/>
            <person name="Clifton S.W."/>
            <person name="Warren W.C."/>
            <person name="Chinwalla A.T."/>
            <person name="Eddy S.R."/>
            <person name="Marra M.A."/>
            <person name="Ovcharenko I."/>
            <person name="Furey T.S."/>
            <person name="Miller W."/>
            <person name="Eichler E.E."/>
            <person name="Bork P."/>
            <person name="Suyama M."/>
            <person name="Torrents D."/>
            <person name="Waterston R.H."/>
            <person name="Wilson R.K."/>
        </authorList>
    </citation>
    <scope>NUCLEOTIDE SEQUENCE [LARGE SCALE GENOMIC DNA]</scope>
</reference>
<reference key="4">
    <citation type="journal article" date="2004" name="Genome Res.">
        <title>The status, quality, and expansion of the NIH full-length cDNA project: the Mammalian Gene Collection (MGC).</title>
        <authorList>
            <consortium name="The MGC Project Team"/>
        </authorList>
    </citation>
    <scope>NUCLEOTIDE SEQUENCE [LARGE SCALE MRNA] (ISOFORM 4)</scope>
    <scope>VARIANT ILE-769</scope>
    <source>
        <tissue>Chondrosarcoma</tissue>
    </source>
</reference>
<reference key="5">
    <citation type="journal article" date="2004" name="Genomics">
        <title>Cloning and characterization of FAM13A1--a gene near a milk protein QTL on BTA6: evidence for population-wide linkage disequilibrium in Israeli Holsteins.</title>
        <authorList>
            <person name="Cohen M."/>
            <person name="Reichenstein M."/>
            <person name="Everts-van der Wind A."/>
            <person name="Heon-Lee J."/>
            <person name="Shani M."/>
            <person name="Lewin H.A."/>
            <person name="Weller J.I."/>
            <person name="Ron M."/>
            <person name="Seroussi E."/>
        </authorList>
    </citation>
    <scope>IDENTIFICATION (ISOFORM 3)</scope>
    <scope>TISSUE SPECIFICITY</scope>
</reference>
<reference key="6">
    <citation type="journal article" date="2008" name="Mol. Cell">
        <title>Kinase-selective enrichment enables quantitative phosphoproteomics of the kinome across the cell cycle.</title>
        <authorList>
            <person name="Daub H."/>
            <person name="Olsen J.V."/>
            <person name="Bairlein M."/>
            <person name="Gnad F."/>
            <person name="Oppermann F.S."/>
            <person name="Korner R."/>
            <person name="Greff Z."/>
            <person name="Keri G."/>
            <person name="Stemmann O."/>
            <person name="Mann M."/>
        </authorList>
    </citation>
    <scope>PHOSPHORYLATION [LARGE SCALE ANALYSIS] AT THR-732</scope>
    <scope>IDENTIFICATION BY MASS SPECTROMETRY [LARGE SCALE ANALYSIS]</scope>
    <source>
        <tissue>Cervix carcinoma</tissue>
    </source>
</reference>
<reference key="7">
    <citation type="journal article" date="2008" name="Proc. Natl. Acad. Sci. U.S.A.">
        <title>A quantitative atlas of mitotic phosphorylation.</title>
        <authorList>
            <person name="Dephoure N."/>
            <person name="Zhou C."/>
            <person name="Villen J."/>
            <person name="Beausoleil S.A."/>
            <person name="Bakalarski C.E."/>
            <person name="Elledge S.J."/>
            <person name="Gygi S.P."/>
        </authorList>
    </citation>
    <scope>IDENTIFICATION BY MASS SPECTROMETRY [LARGE SCALE ANALYSIS]</scope>
    <source>
        <tissue>Cervix carcinoma</tissue>
    </source>
</reference>
<reference key="8">
    <citation type="journal article" date="2009" name="Sci. Signal.">
        <title>Quantitative phosphoproteomic analysis of T cell receptor signaling reveals system-wide modulation of protein-protein interactions.</title>
        <authorList>
            <person name="Mayya V."/>
            <person name="Lundgren D.H."/>
            <person name="Hwang S.-I."/>
            <person name="Rezaul K."/>
            <person name="Wu L."/>
            <person name="Eng J.K."/>
            <person name="Rodionov V."/>
            <person name="Han D.K."/>
        </authorList>
    </citation>
    <scope>IDENTIFICATION BY MASS SPECTROMETRY [LARGE SCALE ANALYSIS]</scope>
    <source>
        <tissue>Leukemic T-cell</tissue>
    </source>
</reference>
<reference key="9">
    <citation type="journal article" date="2013" name="J. Proteome Res.">
        <title>Toward a comprehensive characterization of a human cancer cell phosphoproteome.</title>
        <authorList>
            <person name="Zhou H."/>
            <person name="Di Palma S."/>
            <person name="Preisinger C."/>
            <person name="Peng M."/>
            <person name="Polat A.N."/>
            <person name="Heck A.J."/>
            <person name="Mohammed S."/>
        </authorList>
    </citation>
    <scope>IDENTIFICATION BY MASS SPECTROMETRY [LARGE SCALE ANALYSIS]</scope>
    <source>
        <tissue>Cervix carcinoma</tissue>
        <tissue>Erythroleukemia</tissue>
    </source>
</reference>
<sequence>MGAGALAICQSKAAVRLKEDMKKIVAVPLNEQKDFTYQKLFGVSLQELERQGLTENGIPAVVWNIVEYLTQHGLTQEGLFRVNGNVKVVEQLRLKFESGVPVELGKDGDVCSAASLLKLFLRELPDSLITSALQPRFIQLFQDGRNDVQESSLRDLIKELPDTHYCLLKYLCQFLTKVAKHHVQNRMNVHNLATVFGPNCFHVPPGLEGMKEQDLCNKIMAKILENYNTLFEVEYTENDHLRCENLARLIIVKEVYYKNSLPILLTRGLERDMPKPPPKTKIPKSRSEGSIQAHRVLQPELSDGIPQLSLRLSYRKACLEDMNSAEGAISAKLVPSSQEDERPLSPFYLSAHVPQVSNVSATGELLERTIRSAVEQHLFDVNNSGGQSSEDSESGTLSASSATSARQRRRQSKEQDEVRHGRDKGLINKENTPSGFNHLDDCILNTQEVEKVHKNTFGCAGERSKPKRQKSSTKLSELHDNQDGLVNMESLNSTRSHERTGPDDFEWMSDERKGNEKDGGHTQHFESPTMKIQEHPSLSDTKQQRNQDAGDQEESFVSEVPQSDLTALCDEKNWEEPIPAFSSWQRENSDSDEAHLSPQAGRLIRQLLDEDSDPMLSPRFYAYGQSRQYLDDTEVPPSPPNSHSFMRRRSSSLGSYDDEQEDLTPAQLTRRIQSLKKKIRKFEDRFEEEKKYRPSHSDKAANPEVLKWTNDLAKFRRQLKESKLKISEEDLTPRMRQRSNTLPKSFGSQLEKEDEKKQELVDKAIKPSVEATLESIQRKLQEKRAESSRPEDIKDMTKDQIANEKVALQKALLYYESIHGRPVTKNERQVMKPLYDRYRLVKQILSRANTIPIIGSPSSKRRSPLLQPIIEGETASFFKEIKEEEEGSEDDSNVKPDFMVTLKTDFSARCFLDQFEDDADGFISPMDDKIPSKCSQDTGLSNLHAASIPELLEHLQEMREEKKRIRKKLRDFEDNFFRQNGRNVQKEDRTPMAEEYSEYKHIKAKLRLLEVLISKRDTDSKSM</sequence>
<accession>O94988</accession>
<accession>B4DLC1</accession>
<accession>Q24JP0</accession>
<accession>Q5PR21</accession>
<accession>Q8NBA3</accession>
<gene>
    <name type="primary">FAM13A</name>
    <name type="synonym">FAM13A1</name>
    <name type="synonym">KIAA0914</name>
</gene>
<name>FA13A_HUMAN</name>
<evidence type="ECO:0000250" key="1">
    <source>
        <dbReference type="UniProtKB" id="Q8BGI4"/>
    </source>
</evidence>
<evidence type="ECO:0000255" key="2"/>
<evidence type="ECO:0000255" key="3">
    <source>
        <dbReference type="PROSITE-ProRule" id="PRU00172"/>
    </source>
</evidence>
<evidence type="ECO:0000256" key="4">
    <source>
        <dbReference type="SAM" id="MobiDB-lite"/>
    </source>
</evidence>
<evidence type="ECO:0000269" key="5">
    <source>
    </source>
</evidence>
<evidence type="ECO:0000269" key="6">
    <source>
    </source>
</evidence>
<evidence type="ECO:0000303" key="7">
    <source>
    </source>
</evidence>
<evidence type="ECO:0000303" key="8">
    <source>
    </source>
</evidence>
<evidence type="ECO:0000303" key="9">
    <source>
    </source>
</evidence>
<evidence type="ECO:0000305" key="10"/>
<evidence type="ECO:0007744" key="11">
    <source>
    </source>
</evidence>
<keyword id="KW-0025">Alternative splicing</keyword>
<keyword id="KW-0175">Coiled coil</keyword>
<keyword id="KW-0343">GTPase activation</keyword>
<keyword id="KW-0597">Phosphoprotein</keyword>
<keyword id="KW-1267">Proteomics identification</keyword>
<keyword id="KW-1185">Reference proteome</keyword>